<keyword id="KW-1185">Reference proteome</keyword>
<keyword id="KW-0687">Ribonucleoprotein</keyword>
<keyword id="KW-0689">Ribosomal protein</keyword>
<keyword id="KW-0694">RNA-binding</keyword>
<keyword id="KW-0699">rRNA-binding</keyword>
<dbReference type="EMBL" id="AE001437">
    <property type="protein sequence ID" value="AAK81068.1"/>
    <property type="molecule type" value="Genomic_DNA"/>
</dbReference>
<dbReference type="PIR" id="A97285">
    <property type="entry name" value="A97285"/>
</dbReference>
<dbReference type="RefSeq" id="NP_349728.1">
    <property type="nucleotide sequence ID" value="NC_003030.1"/>
</dbReference>
<dbReference type="RefSeq" id="WP_010966408.1">
    <property type="nucleotide sequence ID" value="NC_003030.1"/>
</dbReference>
<dbReference type="SMR" id="Q97EI2"/>
<dbReference type="STRING" id="272562.CA_C3129"/>
<dbReference type="GeneID" id="44999616"/>
<dbReference type="KEGG" id="cac:CA_C3129"/>
<dbReference type="PATRIC" id="fig|272562.8.peg.3312"/>
<dbReference type="eggNOG" id="COG0185">
    <property type="taxonomic scope" value="Bacteria"/>
</dbReference>
<dbReference type="HOGENOM" id="CLU_144911_0_1_9"/>
<dbReference type="OrthoDB" id="9797833at2"/>
<dbReference type="Proteomes" id="UP000000814">
    <property type="component" value="Chromosome"/>
</dbReference>
<dbReference type="GO" id="GO:0005737">
    <property type="term" value="C:cytoplasm"/>
    <property type="evidence" value="ECO:0007669"/>
    <property type="project" value="UniProtKB-ARBA"/>
</dbReference>
<dbReference type="GO" id="GO:0015935">
    <property type="term" value="C:small ribosomal subunit"/>
    <property type="evidence" value="ECO:0007669"/>
    <property type="project" value="InterPro"/>
</dbReference>
<dbReference type="GO" id="GO:0019843">
    <property type="term" value="F:rRNA binding"/>
    <property type="evidence" value="ECO:0007669"/>
    <property type="project" value="UniProtKB-UniRule"/>
</dbReference>
<dbReference type="GO" id="GO:0003735">
    <property type="term" value="F:structural constituent of ribosome"/>
    <property type="evidence" value="ECO:0007669"/>
    <property type="project" value="InterPro"/>
</dbReference>
<dbReference type="GO" id="GO:0000028">
    <property type="term" value="P:ribosomal small subunit assembly"/>
    <property type="evidence" value="ECO:0007669"/>
    <property type="project" value="TreeGrafter"/>
</dbReference>
<dbReference type="GO" id="GO:0006412">
    <property type="term" value="P:translation"/>
    <property type="evidence" value="ECO:0007669"/>
    <property type="project" value="UniProtKB-UniRule"/>
</dbReference>
<dbReference type="FunFam" id="3.30.860.10:FF:000001">
    <property type="entry name" value="30S ribosomal protein S19"/>
    <property type="match status" value="1"/>
</dbReference>
<dbReference type="Gene3D" id="3.30.860.10">
    <property type="entry name" value="30s Ribosomal Protein S19, Chain A"/>
    <property type="match status" value="1"/>
</dbReference>
<dbReference type="HAMAP" id="MF_00531">
    <property type="entry name" value="Ribosomal_uS19"/>
    <property type="match status" value="1"/>
</dbReference>
<dbReference type="InterPro" id="IPR002222">
    <property type="entry name" value="Ribosomal_uS19"/>
</dbReference>
<dbReference type="InterPro" id="IPR005732">
    <property type="entry name" value="Ribosomal_uS19_bac-type"/>
</dbReference>
<dbReference type="InterPro" id="IPR020934">
    <property type="entry name" value="Ribosomal_uS19_CS"/>
</dbReference>
<dbReference type="InterPro" id="IPR023575">
    <property type="entry name" value="Ribosomal_uS19_SF"/>
</dbReference>
<dbReference type="NCBIfam" id="TIGR01050">
    <property type="entry name" value="rpsS_bact"/>
    <property type="match status" value="1"/>
</dbReference>
<dbReference type="PANTHER" id="PTHR11880">
    <property type="entry name" value="RIBOSOMAL PROTEIN S19P FAMILY MEMBER"/>
    <property type="match status" value="1"/>
</dbReference>
<dbReference type="PANTHER" id="PTHR11880:SF8">
    <property type="entry name" value="SMALL RIBOSOMAL SUBUNIT PROTEIN US19M"/>
    <property type="match status" value="1"/>
</dbReference>
<dbReference type="Pfam" id="PF00203">
    <property type="entry name" value="Ribosomal_S19"/>
    <property type="match status" value="1"/>
</dbReference>
<dbReference type="PIRSF" id="PIRSF002144">
    <property type="entry name" value="Ribosomal_S19"/>
    <property type="match status" value="1"/>
</dbReference>
<dbReference type="PRINTS" id="PR00975">
    <property type="entry name" value="RIBOSOMALS19"/>
</dbReference>
<dbReference type="SUPFAM" id="SSF54570">
    <property type="entry name" value="Ribosomal protein S19"/>
    <property type="match status" value="1"/>
</dbReference>
<dbReference type="PROSITE" id="PS00323">
    <property type="entry name" value="RIBOSOMAL_S19"/>
    <property type="match status" value="1"/>
</dbReference>
<organism>
    <name type="scientific">Clostridium acetobutylicum (strain ATCC 824 / DSM 792 / JCM 1419 / IAM 19013 / LMG 5710 / NBRC 13948 / NRRL B-527 / VKM B-1787 / 2291 / W)</name>
    <dbReference type="NCBI Taxonomy" id="272562"/>
    <lineage>
        <taxon>Bacteria</taxon>
        <taxon>Bacillati</taxon>
        <taxon>Bacillota</taxon>
        <taxon>Clostridia</taxon>
        <taxon>Eubacteriales</taxon>
        <taxon>Clostridiaceae</taxon>
        <taxon>Clostridium</taxon>
    </lineage>
</organism>
<gene>
    <name evidence="1" type="primary">rpsS</name>
    <name type="ordered locus">CA_C3129</name>
</gene>
<reference key="1">
    <citation type="journal article" date="2001" name="J. Bacteriol.">
        <title>Genome sequence and comparative analysis of the solvent-producing bacterium Clostridium acetobutylicum.</title>
        <authorList>
            <person name="Noelling J."/>
            <person name="Breton G."/>
            <person name="Omelchenko M.V."/>
            <person name="Makarova K.S."/>
            <person name="Zeng Q."/>
            <person name="Gibson R."/>
            <person name="Lee H.M."/>
            <person name="Dubois J."/>
            <person name="Qiu D."/>
            <person name="Hitti J."/>
            <person name="Wolf Y.I."/>
            <person name="Tatusov R.L."/>
            <person name="Sabathe F."/>
            <person name="Doucette-Stamm L.A."/>
            <person name="Soucaille P."/>
            <person name="Daly M.J."/>
            <person name="Bennett G.N."/>
            <person name="Koonin E.V."/>
            <person name="Smith D.R."/>
        </authorList>
    </citation>
    <scope>NUCLEOTIDE SEQUENCE [LARGE SCALE GENOMIC DNA]</scope>
    <source>
        <strain>ATCC 824 / DSM 792 / JCM 1419 / IAM 19013 / LMG 5710 / NBRC 13948 / NRRL B-527 / VKM B-1787 / 2291 / W</strain>
    </source>
</reference>
<evidence type="ECO:0000255" key="1">
    <source>
        <dbReference type="HAMAP-Rule" id="MF_00531"/>
    </source>
</evidence>
<evidence type="ECO:0000305" key="2"/>
<feature type="chain" id="PRO_0000129808" description="Small ribosomal subunit protein uS19">
    <location>
        <begin position="1"/>
        <end position="93"/>
    </location>
</feature>
<accession>Q97EI2</accession>
<proteinExistence type="inferred from homology"/>
<comment type="function">
    <text evidence="1">Protein S19 forms a complex with S13 that binds strongly to the 16S ribosomal RNA.</text>
</comment>
<comment type="similarity">
    <text evidence="1">Belongs to the universal ribosomal protein uS19 family.</text>
</comment>
<sequence length="93" mass="10466">MSRSIKKGPFVKESLLNKIVEMNKAGDKKVVKTWSRSSTIFPEMIGHTIAVHDGRKHVPVYISEDMVGHKLGEFVLTRTFRGHGNTEKTTSVK</sequence>
<name>RS19_CLOAB</name>
<protein>
    <recommendedName>
        <fullName evidence="1">Small ribosomal subunit protein uS19</fullName>
    </recommendedName>
    <alternativeName>
        <fullName evidence="2">30S ribosomal protein S19</fullName>
    </alternativeName>
</protein>